<organism>
    <name type="scientific">Haemophilus influenzae (strain ATCC 51907 / DSM 11121 / KW20 / Rd)</name>
    <dbReference type="NCBI Taxonomy" id="71421"/>
    <lineage>
        <taxon>Bacteria</taxon>
        <taxon>Pseudomonadati</taxon>
        <taxon>Pseudomonadota</taxon>
        <taxon>Gammaproteobacteria</taxon>
        <taxon>Pasteurellales</taxon>
        <taxon>Pasteurellaceae</taxon>
        <taxon>Haemophilus</taxon>
    </lineage>
</organism>
<sequence>MSETDLLLKMVRQPVKLYSVATLFHEFSEVITKLEHSVQKEPTSLLSEENWHKQFLKFAQALPAHGSASWLNLDDALQAVVGNSRSAFLHQLIAKLKSRHLQVLELNKIGSEPLDLSNLPAPFYVLLPESFAARITLLVQDKALPYVRVSFEYWHA</sequence>
<name>Y1480_HAEIN</name>
<gene>
    <name type="ordered locus">HI_1480</name>
</gene>
<protein>
    <recommendedName>
        <fullName>Uncharacterized protein HI_1480</fullName>
    </recommendedName>
</protein>
<keyword id="KW-0002">3D-structure</keyword>
<keyword id="KW-1185">Reference proteome</keyword>
<accession>P44209</accession>
<dbReference type="EMBL" id="L42023">
    <property type="protein sequence ID" value="AAC23130.1"/>
    <property type="molecule type" value="Genomic_DNA"/>
</dbReference>
<dbReference type="PIR" id="C64031">
    <property type="entry name" value="C64031"/>
</dbReference>
<dbReference type="RefSeq" id="NP_439631.1">
    <property type="nucleotide sequence ID" value="NC_000907.1"/>
</dbReference>
<dbReference type="PDB" id="1MW5">
    <property type="method" value="X-ray"/>
    <property type="resolution" value="2.10 A"/>
    <property type="chains" value="A/B=1-156"/>
</dbReference>
<dbReference type="PDBsum" id="1MW5"/>
<dbReference type="SMR" id="P44209"/>
<dbReference type="STRING" id="71421.HI_1480"/>
<dbReference type="EnsemblBacteria" id="AAC23130">
    <property type="protein sequence ID" value="AAC23130"/>
    <property type="gene ID" value="HI_1480"/>
</dbReference>
<dbReference type="KEGG" id="hin:HI_1480"/>
<dbReference type="PATRIC" id="fig|71421.8.peg.1547"/>
<dbReference type="HOGENOM" id="CLU_1684098_0_0_6"/>
<dbReference type="OrthoDB" id="9867210at2"/>
<dbReference type="BioCyc" id="HINF71421:G1GJ1-1505-MONOMER"/>
<dbReference type="EvolutionaryTrace" id="P44209"/>
<dbReference type="Proteomes" id="UP000000579">
    <property type="component" value="Chromosome"/>
</dbReference>
<dbReference type="Gene3D" id="1.20.272.30">
    <property type="match status" value="1"/>
</dbReference>
<dbReference type="InterPro" id="IPR037180">
    <property type="entry name" value="HI1480"/>
</dbReference>
<dbReference type="Pfam" id="PF22186">
    <property type="entry name" value="HI1480"/>
    <property type="match status" value="1"/>
</dbReference>
<dbReference type="SUPFAM" id="SSF103277">
    <property type="entry name" value="Hypothetical protein HI1480"/>
    <property type="match status" value="1"/>
</dbReference>
<evidence type="ECO:0007829" key="1">
    <source>
        <dbReference type="PDB" id="1MW5"/>
    </source>
</evidence>
<proteinExistence type="evidence at protein level"/>
<feature type="chain" id="PRO_0000078066" description="Uncharacterized protein HI_1480">
    <location>
        <begin position="1"/>
        <end position="156"/>
    </location>
</feature>
<feature type="helix" evidence="1">
    <location>
        <begin position="4"/>
        <end position="11"/>
    </location>
</feature>
<feature type="strand" evidence="1">
    <location>
        <begin position="15"/>
        <end position="18"/>
    </location>
</feature>
<feature type="helix" evidence="1">
    <location>
        <begin position="20"/>
        <end position="36"/>
    </location>
</feature>
<feature type="helix" evidence="1">
    <location>
        <begin position="48"/>
        <end position="60"/>
    </location>
</feature>
<feature type="strand" evidence="1">
    <location>
        <begin position="64"/>
        <end position="66"/>
    </location>
</feature>
<feature type="helix" evidence="1">
    <location>
        <begin position="70"/>
        <end position="77"/>
    </location>
</feature>
<feature type="turn" evidence="1">
    <location>
        <begin position="82"/>
        <end position="84"/>
    </location>
</feature>
<feature type="helix" evidence="1">
    <location>
        <begin position="85"/>
        <end position="104"/>
    </location>
</feature>
<feature type="helix" evidence="1">
    <location>
        <begin position="106"/>
        <end position="111"/>
    </location>
</feature>
<feature type="strand" evidence="1">
    <location>
        <begin position="123"/>
        <end position="130"/>
    </location>
</feature>
<feature type="helix" evidence="1">
    <location>
        <begin position="131"/>
        <end position="140"/>
    </location>
</feature>
<feature type="strand" evidence="1">
    <location>
        <begin position="142"/>
        <end position="153"/>
    </location>
</feature>
<feature type="helix" evidence="1">
    <location>
        <begin position="154"/>
        <end position="156"/>
    </location>
</feature>
<reference key="1">
    <citation type="journal article" date="1995" name="Science">
        <title>Whole-genome random sequencing and assembly of Haemophilus influenzae Rd.</title>
        <authorList>
            <person name="Fleischmann R.D."/>
            <person name="Adams M.D."/>
            <person name="White O."/>
            <person name="Clayton R.A."/>
            <person name="Kirkness E.F."/>
            <person name="Kerlavage A.R."/>
            <person name="Bult C.J."/>
            <person name="Tomb J.-F."/>
            <person name="Dougherty B.A."/>
            <person name="Merrick J.M."/>
            <person name="McKenney K."/>
            <person name="Sutton G.G."/>
            <person name="FitzHugh W."/>
            <person name="Fields C.A."/>
            <person name="Gocayne J.D."/>
            <person name="Scott J.D."/>
            <person name="Shirley R."/>
            <person name="Liu L.-I."/>
            <person name="Glodek A."/>
            <person name="Kelley J.M."/>
            <person name="Weidman J.F."/>
            <person name="Phillips C.A."/>
            <person name="Spriggs T."/>
            <person name="Hedblom E."/>
            <person name="Cotton M.D."/>
            <person name="Utterback T.R."/>
            <person name="Hanna M.C."/>
            <person name="Nguyen D.T."/>
            <person name="Saudek D.M."/>
            <person name="Brandon R.C."/>
            <person name="Fine L.D."/>
            <person name="Fritchman J.L."/>
            <person name="Fuhrmann J.L."/>
            <person name="Geoghagen N.S.M."/>
            <person name="Gnehm C.L."/>
            <person name="McDonald L.A."/>
            <person name="Small K.V."/>
            <person name="Fraser C.M."/>
            <person name="Smith H.O."/>
            <person name="Venter J.C."/>
        </authorList>
    </citation>
    <scope>NUCLEOTIDE SEQUENCE [LARGE SCALE GENOMIC DNA]</scope>
    <source>
        <strain>ATCC 51907 / DSM 11121 / KW20 / Rd</strain>
    </source>
</reference>